<reference key="1">
    <citation type="journal article" date="2007" name="Science">
        <title>The Calyptogena magnifica chemoautotrophic symbiont genome.</title>
        <authorList>
            <person name="Newton I.L.G."/>
            <person name="Woyke T."/>
            <person name="Auchtung T.A."/>
            <person name="Dilly G.F."/>
            <person name="Dutton R.J."/>
            <person name="Fisher M.C."/>
            <person name="Fontanez K.M."/>
            <person name="Lau E."/>
            <person name="Stewart F.J."/>
            <person name="Richardson P.M."/>
            <person name="Barry K.W."/>
            <person name="Saunders E."/>
            <person name="Detter J.C."/>
            <person name="Wu D."/>
            <person name="Eisen J.A."/>
            <person name="Cavanaugh C.M."/>
        </authorList>
    </citation>
    <scope>NUCLEOTIDE SEQUENCE [LARGE SCALE GENOMIC DNA]</scope>
</reference>
<organism>
    <name type="scientific">Ruthia magnifica subsp. Calyptogena magnifica</name>
    <dbReference type="NCBI Taxonomy" id="413404"/>
    <lineage>
        <taxon>Bacteria</taxon>
        <taxon>Pseudomonadati</taxon>
        <taxon>Pseudomonadota</taxon>
        <taxon>Gammaproteobacteria</taxon>
        <taxon>Candidatus Pseudothioglobaceae</taxon>
        <taxon>Candidatus Ruthturnera</taxon>
    </lineage>
</organism>
<sequence length="417" mass="47768">MAEIRNYTLNFGPQHPAAHGVLRLILEIDGEVIERADPHIGLLHRGTEKLVESKPYNQSIGYMDRLDYVSMMCNEHAYIMAIETMLGIKVPERAQYIRVMFDEITRILNHLMWLGTHGLDVGAMSIFLYAFREREKLIDCYEAVSGSRMHATYYRPGGVYRDLPDKMPQYLASGFRTDKELKTMNENRQGSLLDFIADFVKEFPKSIKQYDDLLTDNRIWKQRLVNIGIVSANRAKQLGFTGPMLRGSGVAWDLRKNQPYAVYDQLEFDIPVGVTGDSYDRYLVRMEEMRQSNHIIKQCVKWLQGNPGAVMSDDHKVSPPKRTDMKGDMESLIHHFKLFTEGYCLSEGEIYRAVEHPKGEFGIYLISDGANKPYRVKIRAPGFAHLAAMNEMARGHMLSDVVTIIGTQDIVFGEIDR</sequence>
<protein>
    <recommendedName>
        <fullName evidence="1">NADH-quinone oxidoreductase subunit D</fullName>
        <ecNumber evidence="1">7.1.1.-</ecNumber>
    </recommendedName>
    <alternativeName>
        <fullName evidence="1">NADH dehydrogenase I subunit D</fullName>
    </alternativeName>
    <alternativeName>
        <fullName evidence="1">NDH-1 subunit D</fullName>
    </alternativeName>
</protein>
<dbReference type="EC" id="7.1.1.-" evidence="1"/>
<dbReference type="EMBL" id="CP000488">
    <property type="protein sequence ID" value="ABL02022.1"/>
    <property type="molecule type" value="Genomic_DNA"/>
</dbReference>
<dbReference type="RefSeq" id="WP_011737647.1">
    <property type="nucleotide sequence ID" value="NC_008610.1"/>
</dbReference>
<dbReference type="SMR" id="A1AVR5"/>
<dbReference type="STRING" id="413404.Rmag_0240"/>
<dbReference type="KEGG" id="rma:Rmag_0240"/>
<dbReference type="eggNOG" id="COG0649">
    <property type="taxonomic scope" value="Bacteria"/>
</dbReference>
<dbReference type="HOGENOM" id="CLU_015134_1_1_6"/>
<dbReference type="OrthoDB" id="9801496at2"/>
<dbReference type="Proteomes" id="UP000002587">
    <property type="component" value="Chromosome"/>
</dbReference>
<dbReference type="GO" id="GO:0005886">
    <property type="term" value="C:plasma membrane"/>
    <property type="evidence" value="ECO:0007669"/>
    <property type="project" value="UniProtKB-SubCell"/>
</dbReference>
<dbReference type="GO" id="GO:0051287">
    <property type="term" value="F:NAD binding"/>
    <property type="evidence" value="ECO:0007669"/>
    <property type="project" value="InterPro"/>
</dbReference>
<dbReference type="GO" id="GO:0050136">
    <property type="term" value="F:NADH:ubiquinone reductase (non-electrogenic) activity"/>
    <property type="evidence" value="ECO:0007669"/>
    <property type="project" value="UniProtKB-UniRule"/>
</dbReference>
<dbReference type="GO" id="GO:0048038">
    <property type="term" value="F:quinone binding"/>
    <property type="evidence" value="ECO:0007669"/>
    <property type="project" value="UniProtKB-KW"/>
</dbReference>
<dbReference type="FunFam" id="1.10.645.10:FF:000005">
    <property type="entry name" value="NADH-quinone oxidoreductase subunit D"/>
    <property type="match status" value="1"/>
</dbReference>
<dbReference type="Gene3D" id="1.10.645.10">
    <property type="entry name" value="Cytochrome-c3 Hydrogenase, chain B"/>
    <property type="match status" value="1"/>
</dbReference>
<dbReference type="HAMAP" id="MF_01358">
    <property type="entry name" value="NDH1_NuoD"/>
    <property type="match status" value="1"/>
</dbReference>
<dbReference type="InterPro" id="IPR001135">
    <property type="entry name" value="NADH_Q_OxRdtase_suD"/>
</dbReference>
<dbReference type="InterPro" id="IPR014029">
    <property type="entry name" value="NADH_UbQ_OxRdtase_49kDa_CS"/>
</dbReference>
<dbReference type="InterPro" id="IPR022885">
    <property type="entry name" value="NDH1_su_D/H"/>
</dbReference>
<dbReference type="InterPro" id="IPR029014">
    <property type="entry name" value="NiFe-Hase_large"/>
</dbReference>
<dbReference type="NCBIfam" id="TIGR01962">
    <property type="entry name" value="NuoD"/>
    <property type="match status" value="1"/>
</dbReference>
<dbReference type="NCBIfam" id="NF004739">
    <property type="entry name" value="PRK06075.1"/>
    <property type="match status" value="1"/>
</dbReference>
<dbReference type="PANTHER" id="PTHR11993:SF10">
    <property type="entry name" value="NADH DEHYDROGENASE [UBIQUINONE] IRON-SULFUR PROTEIN 2, MITOCHONDRIAL"/>
    <property type="match status" value="1"/>
</dbReference>
<dbReference type="PANTHER" id="PTHR11993">
    <property type="entry name" value="NADH-UBIQUINONE OXIDOREDUCTASE 49 KDA SUBUNIT"/>
    <property type="match status" value="1"/>
</dbReference>
<dbReference type="Pfam" id="PF00346">
    <property type="entry name" value="Complex1_49kDa"/>
    <property type="match status" value="1"/>
</dbReference>
<dbReference type="SUPFAM" id="SSF56762">
    <property type="entry name" value="HydB/Nqo4-like"/>
    <property type="match status" value="1"/>
</dbReference>
<dbReference type="PROSITE" id="PS00535">
    <property type="entry name" value="COMPLEX1_49K"/>
    <property type="match status" value="1"/>
</dbReference>
<name>NUOD_RUTMC</name>
<proteinExistence type="inferred from homology"/>
<evidence type="ECO:0000255" key="1">
    <source>
        <dbReference type="HAMAP-Rule" id="MF_01358"/>
    </source>
</evidence>
<accession>A1AVR5</accession>
<feature type="chain" id="PRO_0000371923" description="NADH-quinone oxidoreductase subunit D">
    <location>
        <begin position="1"/>
        <end position="417"/>
    </location>
</feature>
<comment type="function">
    <text evidence="1">NDH-1 shuttles electrons from NADH, via FMN and iron-sulfur (Fe-S) centers, to quinones in the respiratory chain. The immediate electron acceptor for the enzyme in this species is believed to be ubiquinone. Couples the redox reaction to proton translocation (for every two electrons transferred, four hydrogen ions are translocated across the cytoplasmic membrane), and thus conserves the redox energy in a proton gradient.</text>
</comment>
<comment type="catalytic activity">
    <reaction evidence="1">
        <text>a quinone + NADH + 5 H(+)(in) = a quinol + NAD(+) + 4 H(+)(out)</text>
        <dbReference type="Rhea" id="RHEA:57888"/>
        <dbReference type="ChEBI" id="CHEBI:15378"/>
        <dbReference type="ChEBI" id="CHEBI:24646"/>
        <dbReference type="ChEBI" id="CHEBI:57540"/>
        <dbReference type="ChEBI" id="CHEBI:57945"/>
        <dbReference type="ChEBI" id="CHEBI:132124"/>
    </reaction>
</comment>
<comment type="subunit">
    <text evidence="1">NDH-1 is composed of 14 different subunits. Subunits NuoB, C, D, E, F, and G constitute the peripheral sector of the complex.</text>
</comment>
<comment type="subcellular location">
    <subcellularLocation>
        <location evidence="1">Cell inner membrane</location>
        <topology evidence="1">Peripheral membrane protein</topology>
        <orientation evidence="1">Cytoplasmic side</orientation>
    </subcellularLocation>
</comment>
<comment type="similarity">
    <text evidence="1">Belongs to the complex I 49 kDa subunit family.</text>
</comment>
<gene>
    <name evidence="1" type="primary">nuoD</name>
    <name type="ordered locus">Rmag_0240</name>
</gene>
<keyword id="KW-0997">Cell inner membrane</keyword>
<keyword id="KW-1003">Cell membrane</keyword>
<keyword id="KW-0472">Membrane</keyword>
<keyword id="KW-0520">NAD</keyword>
<keyword id="KW-0874">Quinone</keyword>
<keyword id="KW-1278">Translocase</keyword>
<keyword id="KW-0813">Transport</keyword>
<keyword id="KW-0830">Ubiquinone</keyword>